<gene>
    <name type="ordered locus">PA14_33160</name>
</gene>
<sequence length="89" mass="9195">MIVRTLLIAAALLGGTAQAAESTDLCGANLQKLDDILAVRGKTSVTGARVTEVKELQAKARQDQASGDTKGCITATTQALQILQNAGKK</sequence>
<protein>
    <recommendedName>
        <fullName>Uncharacterized protein PA14_33160</fullName>
    </recommendedName>
</protein>
<accession>Q02MN4</accession>
<reference key="1">
    <citation type="journal article" date="2006" name="Genome Biol.">
        <title>Genomic analysis reveals that Pseudomonas aeruginosa virulence is combinatorial.</title>
        <authorList>
            <person name="Lee D.G."/>
            <person name="Urbach J.M."/>
            <person name="Wu G."/>
            <person name="Liberati N.T."/>
            <person name="Feinbaum R.L."/>
            <person name="Miyata S."/>
            <person name="Diggins L.T."/>
            <person name="He J."/>
            <person name="Saucier M."/>
            <person name="Deziel E."/>
            <person name="Friedman L."/>
            <person name="Li L."/>
            <person name="Grills G."/>
            <person name="Montgomery K."/>
            <person name="Kucherlapati R."/>
            <person name="Rahme L.G."/>
            <person name="Ausubel F.M."/>
        </authorList>
    </citation>
    <scope>NUCLEOTIDE SEQUENCE [LARGE SCALE GENOMIC DNA]</scope>
    <source>
        <strain>UCBPP-PA14</strain>
    </source>
</reference>
<reference key="2">
    <citation type="journal article" date="2014" name="Anal. Bioanal. Chem.">
        <title>Potential of liquid-isoelectric-focusing protein fractionation to improve phosphoprotein characterization of Pseudomonas aeruginosa PA14.</title>
        <authorList>
            <person name="Ouidir T."/>
            <person name="Jarnier F."/>
            <person name="Cosette P."/>
            <person name="Jouenne T."/>
            <person name="Hardouin J."/>
        </authorList>
    </citation>
    <scope>IDENTIFICATION BY MASS SPECTROMETRY</scope>
    <source>
        <strain>UCBPP-PA14</strain>
    </source>
</reference>
<comment type="subcellular location">
    <subcellularLocation>
        <location evidence="2">Secreted</location>
    </subcellularLocation>
</comment>
<organism>
    <name type="scientific">Pseudomonas aeruginosa (strain UCBPP-PA14)</name>
    <dbReference type="NCBI Taxonomy" id="208963"/>
    <lineage>
        <taxon>Bacteria</taxon>
        <taxon>Pseudomonadati</taxon>
        <taxon>Pseudomonadota</taxon>
        <taxon>Gammaproteobacteria</taxon>
        <taxon>Pseudomonadales</taxon>
        <taxon>Pseudomonadaceae</taxon>
        <taxon>Pseudomonas</taxon>
    </lineage>
</organism>
<feature type="signal peptide" evidence="1">
    <location>
        <begin position="1"/>
        <end position="19"/>
    </location>
</feature>
<feature type="chain" id="PRO_0000431471" description="Uncharacterized protein PA14_33160" evidence="1">
    <location>
        <begin position="20"/>
        <end position="89"/>
    </location>
</feature>
<dbReference type="EMBL" id="CP000438">
    <property type="protein sequence ID" value="ABJ11617.1"/>
    <property type="molecule type" value="Genomic_DNA"/>
</dbReference>
<dbReference type="RefSeq" id="WP_003089681.1">
    <property type="nucleotide sequence ID" value="NZ_CP034244.1"/>
</dbReference>
<dbReference type="SMR" id="Q02MN4"/>
<dbReference type="KEGG" id="pau:PA14_33160"/>
<dbReference type="PseudoCAP" id="PA14_33160"/>
<dbReference type="HOGENOM" id="CLU_148020_0_1_6"/>
<dbReference type="BioCyc" id="PAER208963:G1G74-2788-MONOMER"/>
<dbReference type="Proteomes" id="UP000000653">
    <property type="component" value="Chromosome"/>
</dbReference>
<dbReference type="GO" id="GO:0005576">
    <property type="term" value="C:extracellular region"/>
    <property type="evidence" value="ECO:0007669"/>
    <property type="project" value="UniProtKB-SubCell"/>
</dbReference>
<proteinExistence type="evidence at protein level"/>
<evidence type="ECO:0000255" key="1"/>
<evidence type="ECO:0000305" key="2"/>
<name>Y3316_PSEAB</name>
<keyword id="KW-0964">Secreted</keyword>
<keyword id="KW-0732">Signal</keyword>